<sequence>MCFFLSSLCPVVAERCRSLLVPEDSGVDVENGGKRTIPKSRNGMLGEDMDDAAPLESGLSMSDMQMGSFSTLKAAKRAEVGGTGPKVGRPRKLSVYNPREMSDGNPGEDCLVVGPSATVSHSEGLSASGKRRKQHLPFTVDDLDIMCGVPSPRSGAPCRQPLTCKSHSISSKRAVTGRRKPFDALLQDFKDNNSRKSQQADIPRPLATKVYCSGHSQRMRAVITSLYRESISGRSSLPQNEQTLALDANPQQQQQQHTLMSLNKVSECWWIWIKTPFCSGISMTQVRTTEGGDKVEVVLYAAAHLPAFTARRLSGYSLQRNQQAAHSGPIHVARSTLPFENPDFTGV</sequence>
<gene>
    <name type="ORF">SELMODRAFT_439258</name>
</gene>
<name>Y3925_SELML</name>
<proteinExistence type="evidence at transcript level"/>
<protein>
    <recommendedName>
        <fullName>SCA7 domain-containing protein SELMODRAFT_439258</fullName>
    </recommendedName>
</protein>
<comment type="sequence caution" evidence="4">
    <conflict type="erroneous gene model prediction">
        <sequence resource="EMBL-CDS" id="EFJ33221"/>
    </conflict>
    <text>The predicted gene has been split into 2 genes.</text>
</comment>
<evidence type="ECO:0000255" key="1"/>
<evidence type="ECO:0000255" key="2">
    <source>
        <dbReference type="PROSITE-ProRule" id="PRU00838"/>
    </source>
</evidence>
<evidence type="ECO:0000256" key="3">
    <source>
        <dbReference type="SAM" id="MobiDB-lite"/>
    </source>
</evidence>
<evidence type="ECO:0000305" key="4"/>
<dbReference type="EMBL" id="GL377571">
    <property type="protein sequence ID" value="EFJ33221.1"/>
    <property type="status" value="ALT_SEQ"/>
    <property type="molecule type" value="Genomic_DNA"/>
</dbReference>
<dbReference type="RefSeq" id="XP_002965801.1">
    <property type="nucleotide sequence ID" value="XM_002965755.1"/>
</dbReference>
<dbReference type="SMR" id="P0DH66"/>
<dbReference type="STRING" id="88036.P0DH66"/>
<dbReference type="KEGG" id="smo:SELMODRAFT_439258"/>
<dbReference type="eggNOG" id="ENOG502SUK2">
    <property type="taxonomic scope" value="Eukaryota"/>
</dbReference>
<dbReference type="InParanoid" id="P0DH66"/>
<dbReference type="Proteomes" id="UP000001514">
    <property type="component" value="Unassembled WGS sequence"/>
</dbReference>
<dbReference type="GO" id="GO:0000124">
    <property type="term" value="C:SAGA complex"/>
    <property type="evidence" value="ECO:0007669"/>
    <property type="project" value="InterPro"/>
</dbReference>
<dbReference type="Gene3D" id="6.10.140.670">
    <property type="match status" value="1"/>
</dbReference>
<dbReference type="InterPro" id="IPR013243">
    <property type="entry name" value="SCA7_dom"/>
</dbReference>
<dbReference type="InterPro" id="IPR037804">
    <property type="entry name" value="SGF73"/>
</dbReference>
<dbReference type="PANTHER" id="PTHR47805">
    <property type="entry name" value="SAGA-ASSOCIATED FACTOR 73"/>
    <property type="match status" value="1"/>
</dbReference>
<dbReference type="PANTHER" id="PTHR47805:SF1">
    <property type="entry name" value="SAGA-ASSOCIATED FACTOR 73"/>
    <property type="match status" value="1"/>
</dbReference>
<dbReference type="Pfam" id="PF08313">
    <property type="entry name" value="SCA7"/>
    <property type="match status" value="1"/>
</dbReference>
<dbReference type="PROSITE" id="PS51505">
    <property type="entry name" value="SCA7"/>
    <property type="match status" value="1"/>
</dbReference>
<reference key="1">
    <citation type="journal article" date="2011" name="Science">
        <title>The Selaginella genome identifies genetic changes associated with the evolution of vascular plants.</title>
        <authorList>
            <person name="Banks J.A."/>
            <person name="Nishiyama T."/>
            <person name="Hasebe M."/>
            <person name="Bowman J.L."/>
            <person name="Gribskov M."/>
            <person name="dePamphilis C."/>
            <person name="Albert V.A."/>
            <person name="Aono N."/>
            <person name="Aoyama T."/>
            <person name="Ambrose B.A."/>
            <person name="Ashton N.W."/>
            <person name="Axtell M.J."/>
            <person name="Barker E."/>
            <person name="Barker M.S."/>
            <person name="Bennetzen J.L."/>
            <person name="Bonawitz N.D."/>
            <person name="Chapple C."/>
            <person name="Cheng C."/>
            <person name="Correa L.G."/>
            <person name="Dacre M."/>
            <person name="DeBarry J."/>
            <person name="Dreyer I."/>
            <person name="Elias M."/>
            <person name="Engstrom E.M."/>
            <person name="Estelle M."/>
            <person name="Feng L."/>
            <person name="Finet C."/>
            <person name="Floyd S.K."/>
            <person name="Frommer W.B."/>
            <person name="Fujita T."/>
            <person name="Gramzow L."/>
            <person name="Gutensohn M."/>
            <person name="Harholt J."/>
            <person name="Hattori M."/>
            <person name="Heyl A."/>
            <person name="Hirai T."/>
            <person name="Hiwatashi Y."/>
            <person name="Ishikawa M."/>
            <person name="Iwata M."/>
            <person name="Karol K.G."/>
            <person name="Koehler B."/>
            <person name="Kolukisaoglu U."/>
            <person name="Kubo M."/>
            <person name="Kurata T."/>
            <person name="Lalonde S."/>
            <person name="Li K."/>
            <person name="Li Y."/>
            <person name="Litt A."/>
            <person name="Lyons E."/>
            <person name="Manning G."/>
            <person name="Maruyama T."/>
            <person name="Michael T.P."/>
            <person name="Mikami K."/>
            <person name="Miyazaki S."/>
            <person name="Morinaga S."/>
            <person name="Murata T."/>
            <person name="Mueller-Roeber B."/>
            <person name="Nelson D.R."/>
            <person name="Obara M."/>
            <person name="Oguri Y."/>
            <person name="Olmstead R.G."/>
            <person name="Onodera N."/>
            <person name="Petersen B.L."/>
            <person name="Pils B."/>
            <person name="Prigge M."/>
            <person name="Rensing S.A."/>
            <person name="Riano-Pachon D.M."/>
            <person name="Roberts A.W."/>
            <person name="Sato Y."/>
            <person name="Scheller H.V."/>
            <person name="Schulz B."/>
            <person name="Schulz C."/>
            <person name="Shakirov E.V."/>
            <person name="Shibagaki N."/>
            <person name="Shinohara N."/>
            <person name="Shippen D.E."/>
            <person name="Soerensen I."/>
            <person name="Sotooka R."/>
            <person name="Sugimoto N."/>
            <person name="Sugita M."/>
            <person name="Sumikawa N."/>
            <person name="Tanurdzic M."/>
            <person name="Theissen G."/>
            <person name="Ulvskov P."/>
            <person name="Wakazuki S."/>
            <person name="Weng J.K."/>
            <person name="Willats W.W."/>
            <person name="Wipf D."/>
            <person name="Wolf P.G."/>
            <person name="Yang L."/>
            <person name="Zimmer A.D."/>
            <person name="Zhu Q."/>
            <person name="Mitros T."/>
            <person name="Hellsten U."/>
            <person name="Loque D."/>
            <person name="Otillar R."/>
            <person name="Salamov A."/>
            <person name="Schmutz J."/>
            <person name="Shapiro H."/>
            <person name="Lindquist E."/>
            <person name="Lucas S."/>
            <person name="Rokhsar D."/>
            <person name="Grigoriev I.V."/>
        </authorList>
    </citation>
    <scope>NUCLEOTIDE SEQUENCE [LARGE SCALE GENOMIC DNA]</scope>
</reference>
<organism>
    <name type="scientific">Selaginella moellendorffii</name>
    <name type="common">Spikemoss</name>
    <dbReference type="NCBI Taxonomy" id="88036"/>
    <lineage>
        <taxon>Eukaryota</taxon>
        <taxon>Viridiplantae</taxon>
        <taxon>Streptophyta</taxon>
        <taxon>Embryophyta</taxon>
        <taxon>Tracheophyta</taxon>
        <taxon>Lycopodiopsida</taxon>
        <taxon>Selaginellales</taxon>
        <taxon>Selaginellaceae</taxon>
        <taxon>Selaginella</taxon>
    </lineage>
</organism>
<feature type="signal peptide" evidence="1">
    <location>
        <begin position="1"/>
        <end position="13"/>
    </location>
</feature>
<feature type="chain" id="PRO_0000412058" description="SCA7 domain-containing protein SELMODRAFT_439258">
    <location>
        <begin position="14"/>
        <end position="347"/>
    </location>
</feature>
<feature type="domain" description="SCA7" evidence="2">
    <location>
        <begin position="134"/>
        <end position="201"/>
    </location>
</feature>
<feature type="region of interest" description="Disordered" evidence="3">
    <location>
        <begin position="77"/>
        <end position="106"/>
    </location>
</feature>
<keyword id="KW-1185">Reference proteome</keyword>
<keyword id="KW-0732">Signal</keyword>
<accession>P0DH66</accession>
<accession>D8R355</accession>